<keyword id="KW-0067">ATP-binding</keyword>
<keyword id="KW-0963">Cytoplasm</keyword>
<keyword id="KW-0227">DNA damage</keyword>
<keyword id="KW-0234">DNA repair</keyword>
<keyword id="KW-0235">DNA replication</keyword>
<keyword id="KW-0238">DNA-binding</keyword>
<keyword id="KW-0547">Nucleotide-binding</keyword>
<keyword id="KW-0742">SOS response</keyword>
<accession>Q0I0Y5</accession>
<name>RECF_HISS1</name>
<dbReference type="EMBL" id="CP000436">
    <property type="protein sequence ID" value="ABI24416.1"/>
    <property type="molecule type" value="Genomic_DNA"/>
</dbReference>
<dbReference type="SMR" id="Q0I0Y5"/>
<dbReference type="KEGG" id="hso:HS_0138"/>
<dbReference type="eggNOG" id="COG1195">
    <property type="taxonomic scope" value="Bacteria"/>
</dbReference>
<dbReference type="HOGENOM" id="CLU_040267_0_0_6"/>
<dbReference type="GO" id="GO:0005737">
    <property type="term" value="C:cytoplasm"/>
    <property type="evidence" value="ECO:0007669"/>
    <property type="project" value="UniProtKB-SubCell"/>
</dbReference>
<dbReference type="GO" id="GO:0005524">
    <property type="term" value="F:ATP binding"/>
    <property type="evidence" value="ECO:0007669"/>
    <property type="project" value="UniProtKB-UniRule"/>
</dbReference>
<dbReference type="GO" id="GO:0003697">
    <property type="term" value="F:single-stranded DNA binding"/>
    <property type="evidence" value="ECO:0007669"/>
    <property type="project" value="UniProtKB-UniRule"/>
</dbReference>
<dbReference type="GO" id="GO:0006260">
    <property type="term" value="P:DNA replication"/>
    <property type="evidence" value="ECO:0007669"/>
    <property type="project" value="UniProtKB-UniRule"/>
</dbReference>
<dbReference type="GO" id="GO:0000731">
    <property type="term" value="P:DNA synthesis involved in DNA repair"/>
    <property type="evidence" value="ECO:0007669"/>
    <property type="project" value="TreeGrafter"/>
</dbReference>
<dbReference type="GO" id="GO:0006302">
    <property type="term" value="P:double-strand break repair"/>
    <property type="evidence" value="ECO:0007669"/>
    <property type="project" value="TreeGrafter"/>
</dbReference>
<dbReference type="GO" id="GO:0009432">
    <property type="term" value="P:SOS response"/>
    <property type="evidence" value="ECO:0007669"/>
    <property type="project" value="UniProtKB-UniRule"/>
</dbReference>
<dbReference type="FunFam" id="1.20.1050.90:FF:000001">
    <property type="entry name" value="DNA replication and repair protein RecF"/>
    <property type="match status" value="1"/>
</dbReference>
<dbReference type="Gene3D" id="3.40.50.300">
    <property type="entry name" value="P-loop containing nucleotide triphosphate hydrolases"/>
    <property type="match status" value="1"/>
</dbReference>
<dbReference type="Gene3D" id="1.20.1050.90">
    <property type="entry name" value="RecF/RecN/SMC, N-terminal domain"/>
    <property type="match status" value="1"/>
</dbReference>
<dbReference type="HAMAP" id="MF_00365">
    <property type="entry name" value="RecF"/>
    <property type="match status" value="1"/>
</dbReference>
<dbReference type="InterPro" id="IPR001238">
    <property type="entry name" value="DNA-binding_RecF"/>
</dbReference>
<dbReference type="InterPro" id="IPR018078">
    <property type="entry name" value="DNA-binding_RecF_CS"/>
</dbReference>
<dbReference type="InterPro" id="IPR027417">
    <property type="entry name" value="P-loop_NTPase"/>
</dbReference>
<dbReference type="InterPro" id="IPR003395">
    <property type="entry name" value="RecF/RecN/SMC_N"/>
</dbReference>
<dbReference type="InterPro" id="IPR042174">
    <property type="entry name" value="RecF_2"/>
</dbReference>
<dbReference type="NCBIfam" id="TIGR00611">
    <property type="entry name" value="recf"/>
    <property type="match status" value="1"/>
</dbReference>
<dbReference type="PANTHER" id="PTHR32182">
    <property type="entry name" value="DNA REPLICATION AND REPAIR PROTEIN RECF"/>
    <property type="match status" value="1"/>
</dbReference>
<dbReference type="PANTHER" id="PTHR32182:SF0">
    <property type="entry name" value="DNA REPLICATION AND REPAIR PROTEIN RECF"/>
    <property type="match status" value="1"/>
</dbReference>
<dbReference type="Pfam" id="PF02463">
    <property type="entry name" value="SMC_N"/>
    <property type="match status" value="1"/>
</dbReference>
<dbReference type="SUPFAM" id="SSF52540">
    <property type="entry name" value="P-loop containing nucleoside triphosphate hydrolases"/>
    <property type="match status" value="1"/>
</dbReference>
<dbReference type="PROSITE" id="PS00617">
    <property type="entry name" value="RECF_1"/>
    <property type="match status" value="1"/>
</dbReference>
<dbReference type="PROSITE" id="PS00618">
    <property type="entry name" value="RECF_2"/>
    <property type="match status" value="1"/>
</dbReference>
<gene>
    <name evidence="1" type="primary">recF</name>
    <name type="ordered locus">HS_0138</name>
</gene>
<feature type="chain" id="PRO_1000048527" description="DNA replication and repair protein RecF">
    <location>
        <begin position="1"/>
        <end position="358"/>
    </location>
</feature>
<feature type="binding site" evidence="1">
    <location>
        <begin position="30"/>
        <end position="37"/>
    </location>
    <ligand>
        <name>ATP</name>
        <dbReference type="ChEBI" id="CHEBI:30616"/>
    </ligand>
</feature>
<reference key="1">
    <citation type="journal article" date="2007" name="J. Bacteriol.">
        <title>Complete genome sequence of Haemophilus somnus (Histophilus somni) strain 129Pt and comparison to Haemophilus ducreyi 35000HP and Haemophilus influenzae Rd.</title>
        <authorList>
            <person name="Challacombe J.F."/>
            <person name="Duncan A.J."/>
            <person name="Brettin T.S."/>
            <person name="Bruce D."/>
            <person name="Chertkov O."/>
            <person name="Detter J.C."/>
            <person name="Han C.S."/>
            <person name="Misra M."/>
            <person name="Richardson P."/>
            <person name="Tapia R."/>
            <person name="Thayer N."/>
            <person name="Xie G."/>
            <person name="Inzana T.J."/>
        </authorList>
    </citation>
    <scope>NUCLEOTIDE SEQUENCE [LARGE SCALE GENOMIC DNA]</scope>
    <source>
        <strain>129Pt</strain>
    </source>
</reference>
<comment type="function">
    <text evidence="1">The RecF protein is involved in DNA metabolism; it is required for DNA replication and normal SOS inducibility. RecF binds preferentially to single-stranded, linear DNA. It also seems to bind ATP.</text>
</comment>
<comment type="subcellular location">
    <subcellularLocation>
        <location evidence="1">Cytoplasm</location>
    </subcellularLocation>
</comment>
<comment type="similarity">
    <text evidence="1">Belongs to the RecF family.</text>
</comment>
<sequence length="358" mass="41598">MAISRLIINHFRNLTAIDLEFERGFNFIIGNNGSGKTSLLEAIFYLGHGRSFKSAVANRIISYQQPHFILHGKIQEQQHQWSVGLQKQRQGNTLMKINGEDAKKISDLAHLLPMQLITPEGLTLLNGGPSYRRAYLDWGLFHHNASFYNAWSSLNRLLKQRNSALQQVCSYEKLKIWDRELTKLAYQVSYWREAYAEALRSEIEKTCQLFLPELEISVSFHQGWDKNMDYADLLQQNFERDRALGYTFSGPQKADFRFKANGLPVEDILSRGQLKLLMCALRLAQGEHLMQQKKRHCIFLLDDFASELDQYKRTLLAERLQKNGSQVFVTAITQEQLQQIQPEKHRTFYLENGRIKDL</sequence>
<proteinExistence type="inferred from homology"/>
<evidence type="ECO:0000255" key="1">
    <source>
        <dbReference type="HAMAP-Rule" id="MF_00365"/>
    </source>
</evidence>
<protein>
    <recommendedName>
        <fullName evidence="1">DNA replication and repair protein RecF</fullName>
    </recommendedName>
</protein>
<organism>
    <name type="scientific">Histophilus somni (strain 129Pt)</name>
    <name type="common">Haemophilus somnus</name>
    <dbReference type="NCBI Taxonomy" id="205914"/>
    <lineage>
        <taxon>Bacteria</taxon>
        <taxon>Pseudomonadati</taxon>
        <taxon>Pseudomonadota</taxon>
        <taxon>Gammaproteobacteria</taxon>
        <taxon>Pasteurellales</taxon>
        <taxon>Pasteurellaceae</taxon>
        <taxon>Histophilus</taxon>
    </lineage>
</organism>